<protein>
    <recommendedName>
        <fullName evidence="1">Periplasmic nitrate reductase</fullName>
        <ecNumber evidence="1">1.9.6.1</ecNumber>
    </recommendedName>
</protein>
<accession>A1VZC8</accession>
<proteinExistence type="inferred from homology"/>
<reference key="1">
    <citation type="submission" date="2006-12" db="EMBL/GenBank/DDBJ databases">
        <authorList>
            <person name="Fouts D.E."/>
            <person name="Nelson K.E."/>
            <person name="Sebastian Y."/>
        </authorList>
    </citation>
    <scope>NUCLEOTIDE SEQUENCE [LARGE SCALE GENOMIC DNA]</scope>
    <source>
        <strain>81-176</strain>
    </source>
</reference>
<evidence type="ECO:0000255" key="1">
    <source>
        <dbReference type="HAMAP-Rule" id="MF_01630"/>
    </source>
</evidence>
<gene>
    <name evidence="1" type="primary">napA</name>
    <name type="ordered locus">CJJ81176_0801</name>
</gene>
<feature type="signal peptide" description="Tat-type signal" evidence="1">
    <location>
        <begin position="1"/>
        <end position="30"/>
    </location>
</feature>
<feature type="chain" id="PRO_1000069714" description="Periplasmic nitrate reductase" evidence="1">
    <location>
        <begin position="31"/>
        <end position="923"/>
    </location>
</feature>
<feature type="domain" description="4Fe-4S Mo/W bis-MGD-type" evidence="1">
    <location>
        <begin position="34"/>
        <end position="90"/>
    </location>
</feature>
<feature type="binding site" evidence="1">
    <location>
        <position position="41"/>
    </location>
    <ligand>
        <name>[4Fe-4S] cluster</name>
        <dbReference type="ChEBI" id="CHEBI:49883"/>
    </ligand>
</feature>
<feature type="binding site" evidence="1">
    <location>
        <position position="44"/>
    </location>
    <ligand>
        <name>[4Fe-4S] cluster</name>
        <dbReference type="ChEBI" id="CHEBI:49883"/>
    </ligand>
</feature>
<feature type="binding site" evidence="1">
    <location>
        <position position="48"/>
    </location>
    <ligand>
        <name>[4Fe-4S] cluster</name>
        <dbReference type="ChEBI" id="CHEBI:49883"/>
    </ligand>
</feature>
<feature type="binding site" evidence="1">
    <location>
        <position position="76"/>
    </location>
    <ligand>
        <name>[4Fe-4S] cluster</name>
        <dbReference type="ChEBI" id="CHEBI:49883"/>
    </ligand>
</feature>
<feature type="binding site" evidence="1">
    <location>
        <position position="78"/>
    </location>
    <ligand>
        <name>Mo-bis(molybdopterin guanine dinucleotide)</name>
        <dbReference type="ChEBI" id="CHEBI:60539"/>
    </ligand>
</feature>
<feature type="binding site" evidence="1">
    <location>
        <position position="146"/>
    </location>
    <ligand>
        <name>Mo-bis(molybdopterin guanine dinucleotide)</name>
        <dbReference type="ChEBI" id="CHEBI:60539"/>
    </ligand>
</feature>
<feature type="binding site" evidence="1">
    <location>
        <position position="171"/>
    </location>
    <ligand>
        <name>Mo-bis(molybdopterin guanine dinucleotide)</name>
        <dbReference type="ChEBI" id="CHEBI:60539"/>
    </ligand>
</feature>
<feature type="binding site" evidence="1">
    <location>
        <position position="175"/>
    </location>
    <ligand>
        <name>Mo-bis(molybdopterin guanine dinucleotide)</name>
        <dbReference type="ChEBI" id="CHEBI:60539"/>
    </ligand>
</feature>
<feature type="binding site" evidence="1">
    <location>
        <begin position="208"/>
        <end position="215"/>
    </location>
    <ligand>
        <name>Mo-bis(molybdopterin guanine dinucleotide)</name>
        <dbReference type="ChEBI" id="CHEBI:60539"/>
    </ligand>
</feature>
<feature type="binding site" evidence="1">
    <location>
        <position position="416"/>
    </location>
    <ligand>
        <name>Mo-bis(molybdopterin guanine dinucleotide)</name>
        <dbReference type="ChEBI" id="CHEBI:60539"/>
    </ligand>
</feature>
<feature type="binding site" evidence="1">
    <location>
        <position position="420"/>
    </location>
    <ligand>
        <name>Mo-bis(molybdopterin guanine dinucleotide)</name>
        <dbReference type="ChEBI" id="CHEBI:60539"/>
    </ligand>
</feature>
<feature type="binding site" evidence="1">
    <location>
        <position position="526"/>
    </location>
    <ligand>
        <name>Mo-bis(molybdopterin guanine dinucleotide)</name>
        <dbReference type="ChEBI" id="CHEBI:60539"/>
    </ligand>
</feature>
<feature type="binding site" evidence="1">
    <location>
        <begin position="551"/>
        <end position="552"/>
    </location>
    <ligand>
        <name>Mo-bis(molybdopterin guanine dinucleotide)</name>
        <dbReference type="ChEBI" id="CHEBI:60539"/>
    </ligand>
</feature>
<feature type="binding site" evidence="1">
    <location>
        <position position="574"/>
    </location>
    <ligand>
        <name>Mo-bis(molybdopterin guanine dinucleotide)</name>
        <dbReference type="ChEBI" id="CHEBI:60539"/>
    </ligand>
</feature>
<feature type="binding site" evidence="1">
    <location>
        <position position="601"/>
    </location>
    <ligand>
        <name>Mo-bis(molybdopterin guanine dinucleotide)</name>
        <dbReference type="ChEBI" id="CHEBI:60539"/>
    </ligand>
</feature>
<feature type="binding site" evidence="1">
    <location>
        <begin position="813"/>
        <end position="822"/>
    </location>
    <ligand>
        <name>Mo-bis(molybdopterin guanine dinucleotide)</name>
        <dbReference type="ChEBI" id="CHEBI:60539"/>
    </ligand>
</feature>
<feature type="binding site" evidence="1">
    <location>
        <position position="889"/>
    </location>
    <ligand>
        <name>substrate</name>
    </ligand>
</feature>
<feature type="binding site" evidence="1">
    <location>
        <position position="897"/>
    </location>
    <ligand>
        <name>Mo-bis(molybdopterin guanine dinucleotide)</name>
        <dbReference type="ChEBI" id="CHEBI:60539"/>
    </ligand>
</feature>
<feature type="binding site" evidence="1">
    <location>
        <position position="914"/>
    </location>
    <ligand>
        <name>Mo-bis(molybdopterin guanine dinucleotide)</name>
        <dbReference type="ChEBI" id="CHEBI:60539"/>
    </ligand>
</feature>
<dbReference type="EC" id="1.9.6.1" evidence="1"/>
<dbReference type="EMBL" id="CP000538">
    <property type="protein sequence ID" value="EAQ72370.1"/>
    <property type="molecule type" value="Genomic_DNA"/>
</dbReference>
<dbReference type="RefSeq" id="WP_002869179.1">
    <property type="nucleotide sequence ID" value="NC_008787.1"/>
</dbReference>
<dbReference type="SMR" id="A1VZC8"/>
<dbReference type="KEGG" id="cjj:CJJ81176_0801"/>
<dbReference type="eggNOG" id="COG0243">
    <property type="taxonomic scope" value="Bacteria"/>
</dbReference>
<dbReference type="HOGENOM" id="CLU_000422_13_4_7"/>
<dbReference type="Proteomes" id="UP000000646">
    <property type="component" value="Chromosome"/>
</dbReference>
<dbReference type="GO" id="GO:0016020">
    <property type="term" value="C:membrane"/>
    <property type="evidence" value="ECO:0007669"/>
    <property type="project" value="TreeGrafter"/>
</dbReference>
<dbReference type="GO" id="GO:0009325">
    <property type="term" value="C:nitrate reductase complex"/>
    <property type="evidence" value="ECO:0007669"/>
    <property type="project" value="TreeGrafter"/>
</dbReference>
<dbReference type="GO" id="GO:0042597">
    <property type="term" value="C:periplasmic space"/>
    <property type="evidence" value="ECO:0007669"/>
    <property type="project" value="UniProtKB-SubCell"/>
</dbReference>
<dbReference type="GO" id="GO:0051539">
    <property type="term" value="F:4 iron, 4 sulfur cluster binding"/>
    <property type="evidence" value="ECO:0007669"/>
    <property type="project" value="UniProtKB-KW"/>
</dbReference>
<dbReference type="GO" id="GO:0009055">
    <property type="term" value="F:electron transfer activity"/>
    <property type="evidence" value="ECO:0007669"/>
    <property type="project" value="UniProtKB-UniRule"/>
</dbReference>
<dbReference type="GO" id="GO:0005506">
    <property type="term" value="F:iron ion binding"/>
    <property type="evidence" value="ECO:0007669"/>
    <property type="project" value="UniProtKB-UniRule"/>
</dbReference>
<dbReference type="GO" id="GO:0030151">
    <property type="term" value="F:molybdenum ion binding"/>
    <property type="evidence" value="ECO:0007669"/>
    <property type="project" value="InterPro"/>
</dbReference>
<dbReference type="GO" id="GO:0043546">
    <property type="term" value="F:molybdopterin cofactor binding"/>
    <property type="evidence" value="ECO:0007669"/>
    <property type="project" value="InterPro"/>
</dbReference>
<dbReference type="GO" id="GO:0050140">
    <property type="term" value="F:nitrate reductase (cytochrome) activity"/>
    <property type="evidence" value="ECO:0007669"/>
    <property type="project" value="UniProtKB-EC"/>
</dbReference>
<dbReference type="GO" id="GO:0006777">
    <property type="term" value="P:Mo-molybdopterin cofactor biosynthetic process"/>
    <property type="evidence" value="ECO:0007669"/>
    <property type="project" value="UniProtKB-UniRule"/>
</dbReference>
<dbReference type="GO" id="GO:0042128">
    <property type="term" value="P:nitrate assimilation"/>
    <property type="evidence" value="ECO:0007669"/>
    <property type="project" value="UniProtKB-UniRule"/>
</dbReference>
<dbReference type="CDD" id="cd02791">
    <property type="entry name" value="MopB_CT_Nitrate-R-NapA-like"/>
    <property type="match status" value="1"/>
</dbReference>
<dbReference type="FunFam" id="2.40.40.20:FF:000005">
    <property type="entry name" value="Periplasmic nitrate reductase"/>
    <property type="match status" value="1"/>
</dbReference>
<dbReference type="Gene3D" id="2.40.40.20">
    <property type="match status" value="1"/>
</dbReference>
<dbReference type="Gene3D" id="3.30.200.210">
    <property type="match status" value="1"/>
</dbReference>
<dbReference type="Gene3D" id="3.40.50.740">
    <property type="match status" value="1"/>
</dbReference>
<dbReference type="Gene3D" id="2.20.25.90">
    <property type="entry name" value="ADC-like domains"/>
    <property type="match status" value="1"/>
</dbReference>
<dbReference type="Gene3D" id="3.40.228.10">
    <property type="entry name" value="Dimethylsulfoxide Reductase, domain 2"/>
    <property type="match status" value="1"/>
</dbReference>
<dbReference type="HAMAP" id="MF_01630">
    <property type="entry name" value="Nitrate_reduct_NapA"/>
    <property type="match status" value="1"/>
</dbReference>
<dbReference type="InterPro" id="IPR009010">
    <property type="entry name" value="Asp_de-COase-like_dom_sf"/>
</dbReference>
<dbReference type="InterPro" id="IPR041957">
    <property type="entry name" value="CT_Nitrate-R-NapA-like"/>
</dbReference>
<dbReference type="InterPro" id="IPR006657">
    <property type="entry name" value="MoPterin_dinucl-bd_dom"/>
</dbReference>
<dbReference type="InterPro" id="IPR006656">
    <property type="entry name" value="Mopterin_OxRdtase"/>
</dbReference>
<dbReference type="InterPro" id="IPR006963">
    <property type="entry name" value="Mopterin_OxRdtase_4Fe-4S_dom"/>
</dbReference>
<dbReference type="InterPro" id="IPR027467">
    <property type="entry name" value="MopterinOxRdtase_cofactor_BS"/>
</dbReference>
<dbReference type="InterPro" id="IPR010051">
    <property type="entry name" value="Periplasm_NO3_reductase_lsu"/>
</dbReference>
<dbReference type="InterPro" id="IPR050123">
    <property type="entry name" value="Prok_molybdopt-oxidoreductase"/>
</dbReference>
<dbReference type="InterPro" id="IPR019546">
    <property type="entry name" value="TAT_signal_bac_arc"/>
</dbReference>
<dbReference type="NCBIfam" id="TIGR01706">
    <property type="entry name" value="NAPA"/>
    <property type="match status" value="1"/>
</dbReference>
<dbReference type="NCBIfam" id="NF010055">
    <property type="entry name" value="PRK13532.1"/>
    <property type="match status" value="1"/>
</dbReference>
<dbReference type="NCBIfam" id="TIGR01409">
    <property type="entry name" value="TAT_signal_seq"/>
    <property type="match status" value="1"/>
</dbReference>
<dbReference type="PANTHER" id="PTHR43105:SF11">
    <property type="entry name" value="PERIPLASMIC NITRATE REDUCTASE"/>
    <property type="match status" value="1"/>
</dbReference>
<dbReference type="PANTHER" id="PTHR43105">
    <property type="entry name" value="RESPIRATORY NITRATE REDUCTASE"/>
    <property type="match status" value="1"/>
</dbReference>
<dbReference type="Pfam" id="PF04879">
    <property type="entry name" value="Molybdop_Fe4S4"/>
    <property type="match status" value="1"/>
</dbReference>
<dbReference type="Pfam" id="PF00384">
    <property type="entry name" value="Molybdopterin"/>
    <property type="match status" value="1"/>
</dbReference>
<dbReference type="Pfam" id="PF01568">
    <property type="entry name" value="Molydop_binding"/>
    <property type="match status" value="1"/>
</dbReference>
<dbReference type="SMART" id="SM00926">
    <property type="entry name" value="Molybdop_Fe4S4"/>
    <property type="match status" value="1"/>
</dbReference>
<dbReference type="SUPFAM" id="SSF50692">
    <property type="entry name" value="ADC-like"/>
    <property type="match status" value="1"/>
</dbReference>
<dbReference type="SUPFAM" id="SSF53706">
    <property type="entry name" value="Formate dehydrogenase/DMSO reductase, domains 1-3"/>
    <property type="match status" value="1"/>
</dbReference>
<dbReference type="PROSITE" id="PS51669">
    <property type="entry name" value="4FE4S_MOW_BIS_MGD"/>
    <property type="match status" value="1"/>
</dbReference>
<dbReference type="PROSITE" id="PS00551">
    <property type="entry name" value="MOLYBDOPTERIN_PROK_1"/>
    <property type="match status" value="1"/>
</dbReference>
<comment type="function">
    <text evidence="1">Catalytic subunit of the periplasmic nitrate reductase complex NapAB. Receives electrons from NapB and catalyzes the reduction of nitrate to nitrite.</text>
</comment>
<comment type="catalytic activity">
    <reaction evidence="1">
        <text>2 Fe(II)-[cytochrome] + nitrate + 2 H(+) = 2 Fe(III)-[cytochrome] + nitrite + H2O</text>
        <dbReference type="Rhea" id="RHEA:12909"/>
        <dbReference type="Rhea" id="RHEA-COMP:11777"/>
        <dbReference type="Rhea" id="RHEA-COMP:11778"/>
        <dbReference type="ChEBI" id="CHEBI:15377"/>
        <dbReference type="ChEBI" id="CHEBI:15378"/>
        <dbReference type="ChEBI" id="CHEBI:16301"/>
        <dbReference type="ChEBI" id="CHEBI:17632"/>
        <dbReference type="ChEBI" id="CHEBI:29033"/>
        <dbReference type="ChEBI" id="CHEBI:29034"/>
        <dbReference type="EC" id="1.9.6.1"/>
    </reaction>
</comment>
<comment type="cofactor">
    <cofactor evidence="1">
        <name>[4Fe-4S] cluster</name>
        <dbReference type="ChEBI" id="CHEBI:49883"/>
    </cofactor>
    <text evidence="1">Binds 1 [4Fe-4S] cluster.</text>
</comment>
<comment type="cofactor">
    <cofactor evidence="1">
        <name>Mo-bis(molybdopterin guanine dinucleotide)</name>
        <dbReference type="ChEBI" id="CHEBI:60539"/>
    </cofactor>
    <text evidence="1">Binds 1 molybdenum-bis(molybdopterin guanine dinucleotide) (Mo-bis-MGD) cofactor per subunit.</text>
</comment>
<comment type="subunit">
    <text evidence="1">Component of the periplasmic nitrate reductase NapAB complex composed of NapA and NapB.</text>
</comment>
<comment type="subcellular location">
    <subcellularLocation>
        <location evidence="1">Periplasm</location>
    </subcellularLocation>
</comment>
<comment type="PTM">
    <text evidence="1">Predicted to be exported by the Tat system. The position of the signal peptide cleavage has not been experimentally proven.</text>
</comment>
<comment type="similarity">
    <text evidence="1">Belongs to the prokaryotic molybdopterin-containing oxidoreductase family. NasA/NapA/NarB subfamily.</text>
</comment>
<sequence length="923" mass="104771">MNRRDFIKNTAIASAASVAGLSVPSSMLGAQEDWKWDKAVCRFCGTGCGIMIARKDGKIVATKGDPAAPVNRGLNCIKGYFNAKIMYGEDRLVMPLLRMNEKGEFDKKGKFQQVSWQRAFDEMEKQFKKAYNELGVTGIGIFGSGQYTIQEGYAALKLAKAGFRTNNIDPNARHCMASAVVGFMQTFGVDEPSGCYDDIELTDTIITWGANMAEMHPILWSRVSDRKLSNLDKVKVVNLSTFSNRTSNIADIEIIFKPNTDLAIWNYIAREIVYNHPEAMDMKFIKDHCVFATGYADIGYGMRNNPNHPKFKESEKDTVEKENVITLDDEEAASLSYLGVKAGDKFEMKHQGVADKNWEISFEEFKKGLAPYTLEYTAKVAKGDDNESLEDFKKKLQELANLYIEKNRKVVSFWTMGFNQHTRGSWVNEQAYMVHFLLGKQAKPGSGAFSLTGQPSACGTAREVGTFSHRLPADMVVANPKHREISEKIWKVPAKTINPKPGSPYLNIMRDLEDGKIKFAWVQVNNPWQNTANANHWIAAAREMDNFIVVSDCYPGISAKVADLILPSAMIYEKWGAYGNAERRTQHWKQQVLPVGAAMSDTWQILEFAKRFKLKEVWKEQKVDNKLTLPSVLEEAKAMGYSEDDTLFDVLFANKEAKSFNPNDAIAKGFDNTDVKGDERKIQGSDGKEFTGYGFFVQKYLWEEYRKFGLGHGHDLADFDTYHKVRGLRWPVVNGKETQWRFNTKFDYYAKKAAPNSDFAFYGDFNKMLTNGDLIAPKDEKEHSIKNKAKIFFRPFMKAPERPSKEYPFWLATGRVLEHWHSGTMTMRVPELYRAVPEALCYMSEKDGEKLGLNQGDLVWVESRRGKVKARVDMRGRNKPPVGLVYVPWFDENVYINKVTLDATCPLSKQTDFKKCAVKIYKA</sequence>
<keyword id="KW-0004">4Fe-4S</keyword>
<keyword id="KW-0249">Electron transport</keyword>
<keyword id="KW-0408">Iron</keyword>
<keyword id="KW-0411">Iron-sulfur</keyword>
<keyword id="KW-0479">Metal-binding</keyword>
<keyword id="KW-0500">Molybdenum</keyword>
<keyword id="KW-0534">Nitrate assimilation</keyword>
<keyword id="KW-0560">Oxidoreductase</keyword>
<keyword id="KW-0574">Periplasm</keyword>
<keyword id="KW-0732">Signal</keyword>
<keyword id="KW-0813">Transport</keyword>
<name>NAPA_CAMJJ</name>
<organism>
    <name type="scientific">Campylobacter jejuni subsp. jejuni serotype O:23/36 (strain 81-176)</name>
    <dbReference type="NCBI Taxonomy" id="354242"/>
    <lineage>
        <taxon>Bacteria</taxon>
        <taxon>Pseudomonadati</taxon>
        <taxon>Campylobacterota</taxon>
        <taxon>Epsilonproteobacteria</taxon>
        <taxon>Campylobacterales</taxon>
        <taxon>Campylobacteraceae</taxon>
        <taxon>Campylobacter</taxon>
    </lineage>
</organism>